<gene>
    <name type="primary">rsfA</name>
    <name type="ordered locus">Rv1365c</name>
    <name type="ORF">MTCY02B10.29c</name>
</gene>
<keyword id="KW-1015">Disulfide bond</keyword>
<keyword id="KW-1185">Reference proteome</keyword>
<keyword id="KW-0804">Transcription</keyword>
<keyword id="KW-0805">Transcription regulation</keyword>
<feature type="chain" id="PRO_0000194209" description="Anti-sigma-F factor antagonist RsfA">
    <location>
        <begin position="1"/>
        <end position="128"/>
    </location>
</feature>
<feature type="domain" description="STAS" evidence="1">
    <location>
        <begin position="17"/>
        <end position="128"/>
    </location>
</feature>
<feature type="disulfide bond" evidence="4">
    <location>
        <begin position="73"/>
        <end position="109"/>
    </location>
</feature>
<feature type="mutagenesis site" description="Constitutive interaction with RsbW; leads to active SigF." evidence="2">
    <original>C</original>
    <variation>A</variation>
    <variation>S</variation>
    <location>
        <position position="73"/>
    </location>
</feature>
<feature type="mutagenesis site" description="Constitutive interaction with RsbW; leads to active SigF." evidence="2">
    <original>C</original>
    <variation>A</variation>
    <variation>S</variation>
    <location>
        <position position="109"/>
    </location>
</feature>
<dbReference type="EMBL" id="AL123456">
    <property type="protein sequence ID" value="CCP44123.1"/>
    <property type="molecule type" value="Genomic_DNA"/>
</dbReference>
<dbReference type="PIR" id="D70742">
    <property type="entry name" value="D70742"/>
</dbReference>
<dbReference type="RefSeq" id="NP_215881.1">
    <property type="nucleotide sequence ID" value="NC_000962.3"/>
</dbReference>
<dbReference type="RefSeq" id="WP_003898845.1">
    <property type="nucleotide sequence ID" value="NZ_NVQJ01000031.1"/>
</dbReference>
<dbReference type="SMR" id="P9WGE3"/>
<dbReference type="FunCoup" id="P9WGE3">
    <property type="interactions" value="3"/>
</dbReference>
<dbReference type="IntAct" id="P9WGE3">
    <property type="interactions" value="4"/>
</dbReference>
<dbReference type="STRING" id="83332.Rv1365c"/>
<dbReference type="PaxDb" id="83332-Rv1365c"/>
<dbReference type="DNASU" id="886794"/>
<dbReference type="GeneID" id="45425345"/>
<dbReference type="GeneID" id="886794"/>
<dbReference type="KEGG" id="mtu:Rv1365c"/>
<dbReference type="KEGG" id="mtv:RVBD_1365c"/>
<dbReference type="TubercuList" id="Rv1365c"/>
<dbReference type="eggNOG" id="COG1366">
    <property type="taxonomic scope" value="Bacteria"/>
</dbReference>
<dbReference type="InParanoid" id="P9WGE3"/>
<dbReference type="OrthoDB" id="3700428at2"/>
<dbReference type="PhylomeDB" id="P9WGE3"/>
<dbReference type="Proteomes" id="UP000001584">
    <property type="component" value="Chromosome"/>
</dbReference>
<dbReference type="GO" id="GO:0043856">
    <property type="term" value="F:anti-sigma factor antagonist activity"/>
    <property type="evidence" value="ECO:0000314"/>
    <property type="project" value="MTBBASE"/>
</dbReference>
<dbReference type="GO" id="GO:0006355">
    <property type="term" value="P:regulation of DNA-templated transcription"/>
    <property type="evidence" value="ECO:0000314"/>
    <property type="project" value="MTBBASE"/>
</dbReference>
<dbReference type="CDD" id="cd07043">
    <property type="entry name" value="STAS_anti-anti-sigma_factors"/>
    <property type="match status" value="1"/>
</dbReference>
<dbReference type="FunFam" id="3.30.750.24:FF:000032">
    <property type="entry name" value="Anti-sigma factor antagonist"/>
    <property type="match status" value="1"/>
</dbReference>
<dbReference type="Gene3D" id="3.30.750.24">
    <property type="entry name" value="STAS domain"/>
    <property type="match status" value="1"/>
</dbReference>
<dbReference type="InterPro" id="IPR003658">
    <property type="entry name" value="Anti-sigma_ant"/>
</dbReference>
<dbReference type="InterPro" id="IPR002645">
    <property type="entry name" value="STAS_dom"/>
</dbReference>
<dbReference type="InterPro" id="IPR036513">
    <property type="entry name" value="STAS_dom_sf"/>
</dbReference>
<dbReference type="NCBIfam" id="TIGR00377">
    <property type="entry name" value="ant_ant_sig"/>
    <property type="match status" value="1"/>
</dbReference>
<dbReference type="PANTHER" id="PTHR33495:SF2">
    <property type="entry name" value="ANTI-SIGMA FACTOR ANTAGONIST TM_1081-RELATED"/>
    <property type="match status" value="1"/>
</dbReference>
<dbReference type="PANTHER" id="PTHR33495">
    <property type="entry name" value="ANTI-SIGMA FACTOR ANTAGONIST TM_1081-RELATED-RELATED"/>
    <property type="match status" value="1"/>
</dbReference>
<dbReference type="Pfam" id="PF01740">
    <property type="entry name" value="STAS"/>
    <property type="match status" value="1"/>
</dbReference>
<dbReference type="SUPFAM" id="SSF52091">
    <property type="entry name" value="SpoIIaa-like"/>
    <property type="match status" value="1"/>
</dbReference>
<dbReference type="PROSITE" id="PS50801">
    <property type="entry name" value="STAS"/>
    <property type="match status" value="1"/>
</dbReference>
<sequence>MNPTQAGSFTTPVSNALKATIQHHDSAVIIHARGEIDAANEHTWQDLVTKAAAATTAPEPLVVNLNGLDFMGCCAVAVLAHEAERCRRRGVDVRLVSRDRAVARIIHACGYGDVLPVHPTTESALSAT</sequence>
<proteinExistence type="evidence at protein level"/>
<reference key="1">
    <citation type="journal article" date="1998" name="Nature">
        <title>Deciphering the biology of Mycobacterium tuberculosis from the complete genome sequence.</title>
        <authorList>
            <person name="Cole S.T."/>
            <person name="Brosch R."/>
            <person name="Parkhill J."/>
            <person name="Garnier T."/>
            <person name="Churcher C.M."/>
            <person name="Harris D.E."/>
            <person name="Gordon S.V."/>
            <person name="Eiglmeier K."/>
            <person name="Gas S."/>
            <person name="Barry C.E. III"/>
            <person name="Tekaia F."/>
            <person name="Badcock K."/>
            <person name="Basham D."/>
            <person name="Brown D."/>
            <person name="Chillingworth T."/>
            <person name="Connor R."/>
            <person name="Davies R.M."/>
            <person name="Devlin K."/>
            <person name="Feltwell T."/>
            <person name="Gentles S."/>
            <person name="Hamlin N."/>
            <person name="Holroyd S."/>
            <person name="Hornsby T."/>
            <person name="Jagels K."/>
            <person name="Krogh A."/>
            <person name="McLean J."/>
            <person name="Moule S."/>
            <person name="Murphy L.D."/>
            <person name="Oliver S."/>
            <person name="Osborne J."/>
            <person name="Quail M.A."/>
            <person name="Rajandream M.A."/>
            <person name="Rogers J."/>
            <person name="Rutter S."/>
            <person name="Seeger K."/>
            <person name="Skelton S."/>
            <person name="Squares S."/>
            <person name="Squares R."/>
            <person name="Sulston J.E."/>
            <person name="Taylor K."/>
            <person name="Whitehead S."/>
            <person name="Barrell B.G."/>
        </authorList>
    </citation>
    <scope>NUCLEOTIDE SEQUENCE [LARGE SCALE GENOMIC DNA]</scope>
    <source>
        <strain>ATCC 25618 / H37Rv</strain>
    </source>
</reference>
<reference key="2">
    <citation type="journal article" date="2002" name="Mol. Microbiol.">
        <title>Novel Mycobacterium tuberculosis anti-sigma factor antagonists control sigmaF activity by distinct mechanisms.</title>
        <authorList>
            <person name="Beaucher J."/>
            <person name="Rodrigue S."/>
            <person name="Jacques P.E."/>
            <person name="Smith I."/>
            <person name="Brzezinski R."/>
            <person name="Gaudreau L."/>
        </authorList>
    </citation>
    <scope>FUNCTION AS AN ANTI-SIGMA-F FACTOR ANTAGONIST</scope>
    <scope>INTERACTION WITH RSBW</scope>
    <scope>POSSIBLE DISULFIDE BOND</scope>
    <scope>MUTAGENESIS OF CYS-73 AND CYS-109</scope>
</reference>
<reference key="3">
    <citation type="journal article" date="2009" name="Biochim. Biophys. Acta">
        <title>Interactions of the M. tuberculosis UsfX with the cognate sigma factor SigF and the anti-anti sigma factor RsfA.</title>
        <authorList>
            <person name="Malik S.S."/>
            <person name="Luthra A."/>
            <person name="Ramachandran R."/>
        </authorList>
    </citation>
    <scope>INTERACTION WITH RSBW</scope>
</reference>
<name>RSFA_MYCTU</name>
<organism>
    <name type="scientific">Mycobacterium tuberculosis (strain ATCC 25618 / H37Rv)</name>
    <dbReference type="NCBI Taxonomy" id="83332"/>
    <lineage>
        <taxon>Bacteria</taxon>
        <taxon>Bacillati</taxon>
        <taxon>Actinomycetota</taxon>
        <taxon>Actinomycetes</taxon>
        <taxon>Mycobacteriales</taxon>
        <taxon>Mycobacteriaceae</taxon>
        <taxon>Mycobacterium</taxon>
        <taxon>Mycobacterium tuberculosis complex</taxon>
    </lineage>
</organism>
<evidence type="ECO:0000255" key="1">
    <source>
        <dbReference type="PROSITE-ProRule" id="PRU00198"/>
    </source>
</evidence>
<evidence type="ECO:0000269" key="2">
    <source>
    </source>
</evidence>
<evidence type="ECO:0000269" key="3">
    <source>
    </source>
</evidence>
<evidence type="ECO:0000305" key="4"/>
<comment type="function">
    <text evidence="2">Positive, redox-sensitive regulator of sigma-F (SigF) activity. When reduced binds to anti-sigma-F factor RsbW (UsfX) preventing its binding to SigF, thus activating transcription.</text>
</comment>
<comment type="subunit">
    <text evidence="2 3">Monomer. Interacts with anti-sigma-F factor RsbW (UsfX) under reducing conditions, with a possible 2:1 RbsW:RsfA stoichiometry.</text>
</comment>
<comment type="similarity">
    <text evidence="4">Belongs to the anti-sigma-factor antagonist family.</text>
</comment>
<accession>P9WGE3</accession>
<accession>L0T9F0</accession>
<accession>Q11035</accession>
<protein>
    <recommendedName>
        <fullName>Anti-sigma-F factor antagonist RsfA</fullName>
    </recommendedName>
    <alternativeName>
        <fullName>Anti-anti-sigma F factor RsfA</fullName>
    </alternativeName>
</protein>